<comment type="function">
    <text evidence="1">Required for accurate and efficient protein synthesis under certain stress conditions. May act as a fidelity factor of the translation reaction, by catalyzing a one-codon backward translocation of tRNAs on improperly translocated ribosomes. Back-translocation proceeds from a post-translocation (POST) complex to a pre-translocation (PRE) complex, thus giving elongation factor G a second chance to translocate the tRNAs correctly. Binds to ribosomes in a GTP-dependent manner.</text>
</comment>
<comment type="catalytic activity">
    <reaction evidence="1">
        <text>GTP + H2O = GDP + phosphate + H(+)</text>
        <dbReference type="Rhea" id="RHEA:19669"/>
        <dbReference type="ChEBI" id="CHEBI:15377"/>
        <dbReference type="ChEBI" id="CHEBI:15378"/>
        <dbReference type="ChEBI" id="CHEBI:37565"/>
        <dbReference type="ChEBI" id="CHEBI:43474"/>
        <dbReference type="ChEBI" id="CHEBI:58189"/>
        <dbReference type="EC" id="3.6.5.n1"/>
    </reaction>
</comment>
<comment type="subcellular location">
    <subcellularLocation>
        <location evidence="1">Cell inner membrane</location>
        <topology evidence="1">Peripheral membrane protein</topology>
        <orientation evidence="1">Cytoplasmic side</orientation>
    </subcellularLocation>
</comment>
<comment type="similarity">
    <text evidence="1">Belongs to the TRAFAC class translation factor GTPase superfamily. Classic translation factor GTPase family. LepA subfamily.</text>
</comment>
<name>LEPA_WOLSU</name>
<reference key="1">
    <citation type="journal article" date="2003" name="Proc. Natl. Acad. Sci. U.S.A.">
        <title>Complete genome sequence and analysis of Wolinella succinogenes.</title>
        <authorList>
            <person name="Baar C."/>
            <person name="Eppinger M."/>
            <person name="Raddatz G."/>
            <person name="Simon J."/>
            <person name="Lanz C."/>
            <person name="Klimmek O."/>
            <person name="Nandakumar R."/>
            <person name="Gross R."/>
            <person name="Rosinus A."/>
            <person name="Keller H."/>
            <person name="Jagtap P."/>
            <person name="Linke B."/>
            <person name="Meyer F."/>
            <person name="Lederer H."/>
            <person name="Schuster S.C."/>
        </authorList>
    </citation>
    <scope>NUCLEOTIDE SEQUENCE [LARGE SCALE GENOMIC DNA]</scope>
    <source>
        <strain>ATCC 29543 / DSM 1740 / CCUG 13145 / JCM 31913 / LMG 7466 / NCTC 11488 / FDC 602W</strain>
    </source>
</reference>
<proteinExistence type="inferred from homology"/>
<sequence>MKNIRNFSIIAHIDHGKSTLADRLIQECGAVEARDMKAQLMDTMDIEKERGITIKAQSVRLSYRYEGEDYILNLIDTPGHVDFSYEVSRSLASCEGALLVVDASQGVEAQTIANVYIALDNELEILPVINKIDLPAADPLRVKQEIEQTIGLDCSGALHVSAKSGLGIKELLDEIIRRIPAPNGQESASTKALIYDSWFDNYLGALALVRVVDGSIKVGQNILVMSTGKKHEVLNLMYPHPLAPQKTQEIKTGEIGIVVLGLKNVTDIAVGDTMTDAKNPTKEAIDGFQPAKPFVFAGLYPIDTDRFEELRDALNKLKLNDSSIQYEPETSVALGFGFRVGFLGMLHMEVIKERLEREFDLDLIATAPTVIYHLTLTDGSEVSVQNPSELPPEQKIAKMEEPYVRATIIVPSEYLGNVITMVSRRRGVQEKMEYINETRVMLVYAIPTNEIVMDFYDKLKSGTKGYASFDYEPIEYREGDLAKLDIRVAGEIVDALSIIVPKEKSYERGKELVEAMKEIVPRQLFEVAIQASVGNKIIARETVKSMGKNVTAKCYGGDITRKRKLLEKQKEGKKRMKAIGRVELPQEAFLAVLKID</sequence>
<feature type="chain" id="PRO_0000176376" description="Elongation factor 4">
    <location>
        <begin position="1"/>
        <end position="596"/>
    </location>
</feature>
<feature type="domain" description="tr-type G">
    <location>
        <begin position="2"/>
        <end position="183"/>
    </location>
</feature>
<feature type="binding site" evidence="1">
    <location>
        <begin position="14"/>
        <end position="19"/>
    </location>
    <ligand>
        <name>GTP</name>
        <dbReference type="ChEBI" id="CHEBI:37565"/>
    </ligand>
</feature>
<feature type="binding site" evidence="1">
    <location>
        <begin position="130"/>
        <end position="133"/>
    </location>
    <ligand>
        <name>GTP</name>
        <dbReference type="ChEBI" id="CHEBI:37565"/>
    </ligand>
</feature>
<protein>
    <recommendedName>
        <fullName evidence="1">Elongation factor 4</fullName>
        <shortName evidence="1">EF-4</shortName>
        <ecNumber evidence="1">3.6.5.n1</ecNumber>
    </recommendedName>
    <alternativeName>
        <fullName evidence="1">Ribosomal back-translocase LepA</fullName>
    </alternativeName>
</protein>
<evidence type="ECO:0000255" key="1">
    <source>
        <dbReference type="HAMAP-Rule" id="MF_00071"/>
    </source>
</evidence>
<keyword id="KW-0997">Cell inner membrane</keyword>
<keyword id="KW-1003">Cell membrane</keyword>
<keyword id="KW-0342">GTP-binding</keyword>
<keyword id="KW-0378">Hydrolase</keyword>
<keyword id="KW-0472">Membrane</keyword>
<keyword id="KW-0547">Nucleotide-binding</keyword>
<keyword id="KW-0648">Protein biosynthesis</keyword>
<keyword id="KW-1185">Reference proteome</keyword>
<accession>Q7M8H5</accession>
<organism>
    <name type="scientific">Wolinella succinogenes (strain ATCC 29543 / DSM 1740 / CCUG 13145 / JCM 31913 / LMG 7466 / NCTC 11488 / FDC 602W)</name>
    <name type="common">Vibrio succinogenes</name>
    <dbReference type="NCBI Taxonomy" id="273121"/>
    <lineage>
        <taxon>Bacteria</taxon>
        <taxon>Pseudomonadati</taxon>
        <taxon>Campylobacterota</taxon>
        <taxon>Epsilonproteobacteria</taxon>
        <taxon>Campylobacterales</taxon>
        <taxon>Helicobacteraceae</taxon>
        <taxon>Wolinella</taxon>
    </lineage>
</organism>
<gene>
    <name evidence="1" type="primary">lepA</name>
    <name type="ordered locus">WS1655</name>
</gene>
<dbReference type="EC" id="3.6.5.n1" evidence="1"/>
<dbReference type="EMBL" id="BX571661">
    <property type="protein sequence ID" value="CAE10686.1"/>
    <property type="molecule type" value="Genomic_DNA"/>
</dbReference>
<dbReference type="RefSeq" id="WP_011139470.1">
    <property type="nucleotide sequence ID" value="NC_005090.1"/>
</dbReference>
<dbReference type="SMR" id="Q7M8H5"/>
<dbReference type="STRING" id="273121.WS1655"/>
<dbReference type="KEGG" id="wsu:WS1655"/>
<dbReference type="eggNOG" id="COG0481">
    <property type="taxonomic scope" value="Bacteria"/>
</dbReference>
<dbReference type="HOGENOM" id="CLU_009995_3_3_7"/>
<dbReference type="Proteomes" id="UP000000422">
    <property type="component" value="Chromosome"/>
</dbReference>
<dbReference type="GO" id="GO:0005886">
    <property type="term" value="C:plasma membrane"/>
    <property type="evidence" value="ECO:0007669"/>
    <property type="project" value="UniProtKB-SubCell"/>
</dbReference>
<dbReference type="GO" id="GO:0005525">
    <property type="term" value="F:GTP binding"/>
    <property type="evidence" value="ECO:0007669"/>
    <property type="project" value="UniProtKB-UniRule"/>
</dbReference>
<dbReference type="GO" id="GO:0003924">
    <property type="term" value="F:GTPase activity"/>
    <property type="evidence" value="ECO:0007669"/>
    <property type="project" value="UniProtKB-UniRule"/>
</dbReference>
<dbReference type="GO" id="GO:0043022">
    <property type="term" value="F:ribosome binding"/>
    <property type="evidence" value="ECO:0007669"/>
    <property type="project" value="UniProtKB-UniRule"/>
</dbReference>
<dbReference type="GO" id="GO:0003746">
    <property type="term" value="F:translation elongation factor activity"/>
    <property type="evidence" value="ECO:0007669"/>
    <property type="project" value="UniProtKB-UniRule"/>
</dbReference>
<dbReference type="GO" id="GO:0045727">
    <property type="term" value="P:positive regulation of translation"/>
    <property type="evidence" value="ECO:0007669"/>
    <property type="project" value="UniProtKB-UniRule"/>
</dbReference>
<dbReference type="CDD" id="cd03699">
    <property type="entry name" value="EF4_II"/>
    <property type="match status" value="1"/>
</dbReference>
<dbReference type="CDD" id="cd16260">
    <property type="entry name" value="EF4_III"/>
    <property type="match status" value="1"/>
</dbReference>
<dbReference type="CDD" id="cd01890">
    <property type="entry name" value="LepA"/>
    <property type="match status" value="1"/>
</dbReference>
<dbReference type="CDD" id="cd03709">
    <property type="entry name" value="lepA_C"/>
    <property type="match status" value="1"/>
</dbReference>
<dbReference type="FunFam" id="3.40.50.300:FF:000078">
    <property type="entry name" value="Elongation factor 4"/>
    <property type="match status" value="1"/>
</dbReference>
<dbReference type="FunFam" id="2.40.30.10:FF:000015">
    <property type="entry name" value="Translation factor GUF1, mitochondrial"/>
    <property type="match status" value="1"/>
</dbReference>
<dbReference type="FunFam" id="3.30.70.240:FF:000007">
    <property type="entry name" value="Translation factor GUF1, mitochondrial"/>
    <property type="match status" value="1"/>
</dbReference>
<dbReference type="FunFam" id="3.30.70.2570:FF:000001">
    <property type="entry name" value="Translation factor GUF1, mitochondrial"/>
    <property type="match status" value="1"/>
</dbReference>
<dbReference type="FunFam" id="3.30.70.870:FF:000004">
    <property type="entry name" value="Translation factor GUF1, mitochondrial"/>
    <property type="match status" value="1"/>
</dbReference>
<dbReference type="Gene3D" id="3.30.70.240">
    <property type="match status" value="1"/>
</dbReference>
<dbReference type="Gene3D" id="3.30.70.2570">
    <property type="entry name" value="Elongation factor 4, C-terminal domain"/>
    <property type="match status" value="1"/>
</dbReference>
<dbReference type="Gene3D" id="3.30.70.870">
    <property type="entry name" value="Elongation Factor G (Translational Gtpase), domain 3"/>
    <property type="match status" value="1"/>
</dbReference>
<dbReference type="Gene3D" id="3.40.50.300">
    <property type="entry name" value="P-loop containing nucleotide triphosphate hydrolases"/>
    <property type="match status" value="1"/>
</dbReference>
<dbReference type="Gene3D" id="2.40.30.10">
    <property type="entry name" value="Translation factors"/>
    <property type="match status" value="1"/>
</dbReference>
<dbReference type="HAMAP" id="MF_00071">
    <property type="entry name" value="LepA"/>
    <property type="match status" value="1"/>
</dbReference>
<dbReference type="InterPro" id="IPR006297">
    <property type="entry name" value="EF-4"/>
</dbReference>
<dbReference type="InterPro" id="IPR035647">
    <property type="entry name" value="EFG_III/V"/>
</dbReference>
<dbReference type="InterPro" id="IPR000640">
    <property type="entry name" value="EFG_V-like"/>
</dbReference>
<dbReference type="InterPro" id="IPR004161">
    <property type="entry name" value="EFTu-like_2"/>
</dbReference>
<dbReference type="InterPro" id="IPR031157">
    <property type="entry name" value="G_TR_CS"/>
</dbReference>
<dbReference type="InterPro" id="IPR038363">
    <property type="entry name" value="LepA_C_sf"/>
</dbReference>
<dbReference type="InterPro" id="IPR013842">
    <property type="entry name" value="LepA_CTD"/>
</dbReference>
<dbReference type="InterPro" id="IPR035654">
    <property type="entry name" value="LepA_IV"/>
</dbReference>
<dbReference type="InterPro" id="IPR027417">
    <property type="entry name" value="P-loop_NTPase"/>
</dbReference>
<dbReference type="InterPro" id="IPR005225">
    <property type="entry name" value="Small_GTP-bd"/>
</dbReference>
<dbReference type="InterPro" id="IPR000795">
    <property type="entry name" value="T_Tr_GTP-bd_dom"/>
</dbReference>
<dbReference type="NCBIfam" id="TIGR01393">
    <property type="entry name" value="lepA"/>
    <property type="match status" value="1"/>
</dbReference>
<dbReference type="NCBIfam" id="TIGR00231">
    <property type="entry name" value="small_GTP"/>
    <property type="match status" value="1"/>
</dbReference>
<dbReference type="PANTHER" id="PTHR43512:SF4">
    <property type="entry name" value="TRANSLATION FACTOR GUF1 HOMOLOG, CHLOROPLASTIC"/>
    <property type="match status" value="1"/>
</dbReference>
<dbReference type="PANTHER" id="PTHR43512">
    <property type="entry name" value="TRANSLATION FACTOR GUF1-RELATED"/>
    <property type="match status" value="1"/>
</dbReference>
<dbReference type="Pfam" id="PF00679">
    <property type="entry name" value="EFG_C"/>
    <property type="match status" value="1"/>
</dbReference>
<dbReference type="Pfam" id="PF00009">
    <property type="entry name" value="GTP_EFTU"/>
    <property type="match status" value="1"/>
</dbReference>
<dbReference type="Pfam" id="PF03144">
    <property type="entry name" value="GTP_EFTU_D2"/>
    <property type="match status" value="1"/>
</dbReference>
<dbReference type="Pfam" id="PF06421">
    <property type="entry name" value="LepA_C"/>
    <property type="match status" value="1"/>
</dbReference>
<dbReference type="PRINTS" id="PR00315">
    <property type="entry name" value="ELONGATNFCT"/>
</dbReference>
<dbReference type="SMART" id="SM00838">
    <property type="entry name" value="EFG_C"/>
    <property type="match status" value="1"/>
</dbReference>
<dbReference type="SUPFAM" id="SSF54980">
    <property type="entry name" value="EF-G C-terminal domain-like"/>
    <property type="match status" value="2"/>
</dbReference>
<dbReference type="SUPFAM" id="SSF52540">
    <property type="entry name" value="P-loop containing nucleoside triphosphate hydrolases"/>
    <property type="match status" value="1"/>
</dbReference>
<dbReference type="PROSITE" id="PS00301">
    <property type="entry name" value="G_TR_1"/>
    <property type="match status" value="1"/>
</dbReference>
<dbReference type="PROSITE" id="PS51722">
    <property type="entry name" value="G_TR_2"/>
    <property type="match status" value="1"/>
</dbReference>